<accession>B8F8L6</accession>
<evidence type="ECO:0000255" key="1">
    <source>
        <dbReference type="HAMAP-Rule" id="MF_00632"/>
    </source>
</evidence>
<organism>
    <name type="scientific">Glaesserella parasuis serovar 5 (strain SH0165)</name>
    <name type="common">Haemophilus parasuis</name>
    <dbReference type="NCBI Taxonomy" id="557723"/>
    <lineage>
        <taxon>Bacteria</taxon>
        <taxon>Pseudomonadati</taxon>
        <taxon>Pseudomonadota</taxon>
        <taxon>Gammaproteobacteria</taxon>
        <taxon>Pasteurellales</taxon>
        <taxon>Pasteurellaceae</taxon>
        <taxon>Glaesserella</taxon>
    </lineage>
</organism>
<keyword id="KW-0547">Nucleotide-binding</keyword>
<keyword id="KW-1185">Reference proteome</keyword>
<protein>
    <recommendedName>
        <fullName evidence="1">Nucleotide-binding protein HAPS_2236</fullName>
    </recommendedName>
</protein>
<proteinExistence type="inferred from homology"/>
<gene>
    <name type="ordered locus">HAPS_2236</name>
</gene>
<sequence>MSSFDIVSELTIHEVRNAVENANRVLSTRYDFRGVDATIELNEKNELIRVTTESDFQLEQLIEILIGCCIKRGIQHTSLDIPSESEHHGKLYTKEIKLKQGIKSDMAKQLVKLIKGSKIKVQAQIQGDSIRITGKSRDDLQSTIQLVKNAELGQPLQFNNFRD</sequence>
<comment type="function">
    <text evidence="1">Nucleotide-binding protein.</text>
</comment>
<comment type="similarity">
    <text evidence="1">Belongs to the YajQ family.</text>
</comment>
<dbReference type="EMBL" id="CP001321">
    <property type="protein sequence ID" value="ACL33668.1"/>
    <property type="molecule type" value="Genomic_DNA"/>
</dbReference>
<dbReference type="RefSeq" id="WP_015940131.1">
    <property type="nucleotide sequence ID" value="NC_011852.1"/>
</dbReference>
<dbReference type="SMR" id="B8F8L6"/>
<dbReference type="KEGG" id="hap:HAPS_2236"/>
<dbReference type="PATRIC" id="fig|557723.8.peg.2208"/>
<dbReference type="HOGENOM" id="CLU_099839_1_0_6"/>
<dbReference type="Proteomes" id="UP000006743">
    <property type="component" value="Chromosome"/>
</dbReference>
<dbReference type="GO" id="GO:0005829">
    <property type="term" value="C:cytosol"/>
    <property type="evidence" value="ECO:0007669"/>
    <property type="project" value="TreeGrafter"/>
</dbReference>
<dbReference type="GO" id="GO:0000166">
    <property type="term" value="F:nucleotide binding"/>
    <property type="evidence" value="ECO:0007669"/>
    <property type="project" value="TreeGrafter"/>
</dbReference>
<dbReference type="CDD" id="cd11740">
    <property type="entry name" value="YajQ_like"/>
    <property type="match status" value="1"/>
</dbReference>
<dbReference type="FunFam" id="3.30.70.860:FF:000001">
    <property type="entry name" value="UPF0234 protein YajQ"/>
    <property type="match status" value="1"/>
</dbReference>
<dbReference type="FunFam" id="3.30.70.990:FF:000001">
    <property type="entry name" value="UPF0234 protein YajQ"/>
    <property type="match status" value="1"/>
</dbReference>
<dbReference type="Gene3D" id="3.30.70.860">
    <property type="match status" value="1"/>
</dbReference>
<dbReference type="Gene3D" id="3.30.70.990">
    <property type="entry name" value="YajQ-like, domain 2"/>
    <property type="match status" value="1"/>
</dbReference>
<dbReference type="HAMAP" id="MF_00632">
    <property type="entry name" value="YajQ"/>
    <property type="match status" value="1"/>
</dbReference>
<dbReference type="InterPro" id="IPR007551">
    <property type="entry name" value="DUF520"/>
</dbReference>
<dbReference type="InterPro" id="IPR035571">
    <property type="entry name" value="UPF0234-like_C"/>
</dbReference>
<dbReference type="InterPro" id="IPR035570">
    <property type="entry name" value="UPF0234_N"/>
</dbReference>
<dbReference type="InterPro" id="IPR036183">
    <property type="entry name" value="YajQ-like_sf"/>
</dbReference>
<dbReference type="NCBIfam" id="NF003819">
    <property type="entry name" value="PRK05412.1"/>
    <property type="match status" value="1"/>
</dbReference>
<dbReference type="PANTHER" id="PTHR30476">
    <property type="entry name" value="UPF0234 PROTEIN YAJQ"/>
    <property type="match status" value="1"/>
</dbReference>
<dbReference type="PANTHER" id="PTHR30476:SF0">
    <property type="entry name" value="UPF0234 PROTEIN YAJQ"/>
    <property type="match status" value="1"/>
</dbReference>
<dbReference type="Pfam" id="PF04461">
    <property type="entry name" value="DUF520"/>
    <property type="match status" value="1"/>
</dbReference>
<dbReference type="SUPFAM" id="SSF89963">
    <property type="entry name" value="YajQ-like"/>
    <property type="match status" value="2"/>
</dbReference>
<name>Y2236_GLAP5</name>
<feature type="chain" id="PRO_1000147307" description="Nucleotide-binding protein HAPS_2236">
    <location>
        <begin position="1"/>
        <end position="163"/>
    </location>
</feature>
<reference key="1">
    <citation type="journal article" date="2009" name="J. Bacteriol.">
        <title>Complete genome sequence of Haemophilus parasuis SH0165.</title>
        <authorList>
            <person name="Yue M."/>
            <person name="Yang F."/>
            <person name="Yang J."/>
            <person name="Bei W."/>
            <person name="Cai X."/>
            <person name="Chen L."/>
            <person name="Dong J."/>
            <person name="Zhou R."/>
            <person name="Jin M."/>
            <person name="Jin Q."/>
            <person name="Chen H."/>
        </authorList>
    </citation>
    <scope>NUCLEOTIDE SEQUENCE [LARGE SCALE GENOMIC DNA]</scope>
    <source>
        <strain>SH0165</strain>
    </source>
</reference>